<comment type="catalytic activity">
    <reaction evidence="1">
        <text>alpha-D-galactose 1-phosphate + UDP-alpha-D-glucose = alpha-D-glucose 1-phosphate + UDP-alpha-D-galactose</text>
        <dbReference type="Rhea" id="RHEA:13989"/>
        <dbReference type="ChEBI" id="CHEBI:58336"/>
        <dbReference type="ChEBI" id="CHEBI:58601"/>
        <dbReference type="ChEBI" id="CHEBI:58885"/>
        <dbReference type="ChEBI" id="CHEBI:66914"/>
        <dbReference type="EC" id="2.7.7.12"/>
    </reaction>
</comment>
<comment type="pathway">
    <text evidence="1">Carbohydrate metabolism; galactose metabolism.</text>
</comment>
<comment type="subcellular location">
    <subcellularLocation>
        <location evidence="1">Cytoplasm</location>
    </subcellularLocation>
</comment>
<comment type="similarity">
    <text evidence="1">Belongs to the galactose-1-phosphate uridylyltransferase type 2 family.</text>
</comment>
<dbReference type="EC" id="2.7.7.12" evidence="1"/>
<dbReference type="EMBL" id="CP001015">
    <property type="protein sequence ID" value="ACF55817.1"/>
    <property type="molecule type" value="Genomic_DNA"/>
</dbReference>
<dbReference type="KEGG" id="spx:SPG_1737"/>
<dbReference type="HOGENOM" id="CLU_047799_0_0_9"/>
<dbReference type="UniPathway" id="UPA00214"/>
<dbReference type="GO" id="GO:0005737">
    <property type="term" value="C:cytoplasm"/>
    <property type="evidence" value="ECO:0007669"/>
    <property type="project" value="UniProtKB-SubCell"/>
</dbReference>
<dbReference type="GO" id="GO:0008108">
    <property type="term" value="F:UDP-glucose:hexose-1-phosphate uridylyltransferase activity"/>
    <property type="evidence" value="ECO:0007669"/>
    <property type="project" value="UniProtKB-UniRule"/>
</dbReference>
<dbReference type="GO" id="GO:0006012">
    <property type="term" value="P:galactose metabolic process"/>
    <property type="evidence" value="ECO:0007669"/>
    <property type="project" value="UniProtKB-UniRule"/>
</dbReference>
<dbReference type="HAMAP" id="MF_00571">
    <property type="entry name" value="GalP_UDP_trans"/>
    <property type="match status" value="1"/>
</dbReference>
<dbReference type="InterPro" id="IPR000766">
    <property type="entry name" value="GalP_uridyl_Trfase_II"/>
</dbReference>
<dbReference type="InterPro" id="IPR023425">
    <property type="entry name" value="GalP_uridyl_Trfase_II_CS"/>
</dbReference>
<dbReference type="InterPro" id="IPR005850">
    <property type="entry name" value="GalP_Utransf_C"/>
</dbReference>
<dbReference type="InterPro" id="IPR005849">
    <property type="entry name" value="GalP_Utransf_N"/>
</dbReference>
<dbReference type="NCBIfam" id="TIGR01239">
    <property type="entry name" value="galT_2"/>
    <property type="match status" value="1"/>
</dbReference>
<dbReference type="NCBIfam" id="NF003628">
    <property type="entry name" value="PRK05270.1-1"/>
    <property type="match status" value="1"/>
</dbReference>
<dbReference type="NCBIfam" id="NF003629">
    <property type="entry name" value="PRK05270.1-2"/>
    <property type="match status" value="1"/>
</dbReference>
<dbReference type="NCBIfam" id="NF003631">
    <property type="entry name" value="PRK05270.1-5"/>
    <property type="match status" value="1"/>
</dbReference>
<dbReference type="NCBIfam" id="NF003633">
    <property type="entry name" value="PRK05270.2-2"/>
    <property type="match status" value="1"/>
</dbReference>
<dbReference type="PANTHER" id="PTHR39191:SF1">
    <property type="entry name" value="DUF4922 DOMAIN-CONTAINING PROTEIN"/>
    <property type="match status" value="1"/>
</dbReference>
<dbReference type="PANTHER" id="PTHR39191">
    <property type="entry name" value="GALACTOSE-1-PHOSPHATE URIDYLYLTRANSFERASE"/>
    <property type="match status" value="1"/>
</dbReference>
<dbReference type="Pfam" id="PF02744">
    <property type="entry name" value="GalP_UDP_tr_C"/>
    <property type="match status" value="1"/>
</dbReference>
<dbReference type="Pfam" id="PF01087">
    <property type="entry name" value="GalP_UDP_transf"/>
    <property type="match status" value="1"/>
</dbReference>
<dbReference type="PIRSF" id="PIRSF006005">
    <property type="entry name" value="GalT_BS"/>
    <property type="match status" value="1"/>
</dbReference>
<dbReference type="PROSITE" id="PS01163">
    <property type="entry name" value="GAL_P_UDP_TRANSF_II"/>
    <property type="match status" value="1"/>
</dbReference>
<name>GALT_STRP4</name>
<sequence>MTLVDKFVTHVISESSFEEMDRIYLTNRVLARVGEGVLEVETNLDKLIDLKDQLVEEAVRLETIEDSQTAREILGTELMDLVTPCPSQVNRDFWEAYAYSPEQAIEDFYQLSRKNDYIKLKAIAKNIAYRVPSDYGELEITINLSKPEKDPKEIAVAKLVQASNYPQCQLCLENEGYHGRVNHPARSNHRIIRFEMVGQEWGFQYSPYAYFNEHCIFLDGQHRPMAISRQSFERLLAIVEQFPGYFAGSNADLPIVGGSILTHDHYQGGRHVFPMELAPLQKTFRFAGFEQVKAGIIKWPMSVLRLTSDSKEDLINLADKIFQEWRQYSDSSVQILAETDGTPHHTITPIARKRDGQFELDLVLRDNQTSAEHPDGIYHPHKDVQHIKKENIGLIEVMGLAILPPRLKEEVEQVASYLVGEAVTVADYHQEWADQLKSQHPDLTDKEKALAIVKDSVGAIFVRVLEDAGVYKQTEQGQTAFMRFVEQVGILLD</sequence>
<gene>
    <name evidence="1" type="primary">galT</name>
    <name type="ordered locus">SPG_1737</name>
</gene>
<reference key="1">
    <citation type="journal article" date="2001" name="Microb. Drug Resist.">
        <title>Annotated draft genomic sequence from a Streptococcus pneumoniae type 19F clinical isolate.</title>
        <authorList>
            <person name="Dopazo J."/>
            <person name="Mendoza A."/>
            <person name="Herrero J."/>
            <person name="Caldara F."/>
            <person name="Humbert Y."/>
            <person name="Friedli L."/>
            <person name="Guerrier M."/>
            <person name="Grand-Schenk E."/>
            <person name="Gandin C."/>
            <person name="de Francesco M."/>
            <person name="Polissi A."/>
            <person name="Buell G."/>
            <person name="Feger G."/>
            <person name="Garcia E."/>
            <person name="Peitsch M."/>
            <person name="Garcia-Bustos J.F."/>
        </authorList>
    </citation>
    <scope>NUCLEOTIDE SEQUENCE [LARGE SCALE GENOMIC DNA]</scope>
    <source>
        <strain>G54</strain>
    </source>
</reference>
<reference key="2">
    <citation type="submission" date="2008-03" db="EMBL/GenBank/DDBJ databases">
        <title>Pneumococcal beta glucoside metabolism investigated by whole genome comparison.</title>
        <authorList>
            <person name="Mulas L."/>
            <person name="Trappetti C."/>
            <person name="Hakenbeck R."/>
            <person name="Iannelli F."/>
            <person name="Pozzi G."/>
            <person name="Davidsen T.M."/>
            <person name="Tettelin H."/>
            <person name="Oggioni M."/>
        </authorList>
    </citation>
    <scope>NUCLEOTIDE SEQUENCE [LARGE SCALE GENOMIC DNA]</scope>
    <source>
        <strain>G54</strain>
    </source>
</reference>
<accession>B5E1W4</accession>
<proteinExistence type="inferred from homology"/>
<keyword id="KW-0119">Carbohydrate metabolism</keyword>
<keyword id="KW-0963">Cytoplasm</keyword>
<keyword id="KW-0299">Galactose metabolism</keyword>
<keyword id="KW-0548">Nucleotidyltransferase</keyword>
<keyword id="KW-0808">Transferase</keyword>
<evidence type="ECO:0000255" key="1">
    <source>
        <dbReference type="HAMAP-Rule" id="MF_00571"/>
    </source>
</evidence>
<feature type="chain" id="PRO_1000129494" description="Galactose-1-phosphate uridylyltransferase">
    <location>
        <begin position="1"/>
        <end position="493"/>
    </location>
</feature>
<protein>
    <recommendedName>
        <fullName evidence="1">Galactose-1-phosphate uridylyltransferase</fullName>
        <shortName evidence="1">Gal-1-P uridylyltransferase</shortName>
        <ecNumber evidence="1">2.7.7.12</ecNumber>
    </recommendedName>
    <alternativeName>
        <fullName evidence="1">UDP-glucose--hexose-1-phosphate uridylyltransferase</fullName>
    </alternativeName>
</protein>
<organism>
    <name type="scientific">Streptococcus pneumoniae serotype 19F (strain G54)</name>
    <dbReference type="NCBI Taxonomy" id="512566"/>
    <lineage>
        <taxon>Bacteria</taxon>
        <taxon>Bacillati</taxon>
        <taxon>Bacillota</taxon>
        <taxon>Bacilli</taxon>
        <taxon>Lactobacillales</taxon>
        <taxon>Streptococcaceae</taxon>
        <taxon>Streptococcus</taxon>
    </lineage>
</organism>